<organism>
    <name type="scientific">Synechococcus sp. (strain ATCC 27144 / PCC 6301 / SAUG 1402/1)</name>
    <name type="common">Anacystis nidulans</name>
    <dbReference type="NCBI Taxonomy" id="269084"/>
    <lineage>
        <taxon>Bacteria</taxon>
        <taxon>Bacillati</taxon>
        <taxon>Cyanobacteriota</taxon>
        <taxon>Cyanophyceae</taxon>
        <taxon>Synechococcales</taxon>
        <taxon>Synechococcaceae</taxon>
        <taxon>Synechococcus</taxon>
    </lineage>
</organism>
<gene>
    <name evidence="1" type="primary">rimO</name>
    <name type="ordered locus">syc1594_d</name>
</gene>
<dbReference type="EC" id="2.8.4.4" evidence="1"/>
<dbReference type="EMBL" id="AP008231">
    <property type="protein sequence ID" value="BAD79784.1"/>
    <property type="status" value="ALT_INIT"/>
    <property type="molecule type" value="Genomic_DNA"/>
</dbReference>
<dbReference type="RefSeq" id="WP_041677008.1">
    <property type="nucleotide sequence ID" value="NC_006576.1"/>
</dbReference>
<dbReference type="SMR" id="Q5N1N6"/>
<dbReference type="KEGG" id="syc:syc1594_d"/>
<dbReference type="eggNOG" id="COG0621">
    <property type="taxonomic scope" value="Bacteria"/>
</dbReference>
<dbReference type="Proteomes" id="UP000001175">
    <property type="component" value="Chromosome"/>
</dbReference>
<dbReference type="GO" id="GO:0005829">
    <property type="term" value="C:cytosol"/>
    <property type="evidence" value="ECO:0007669"/>
    <property type="project" value="TreeGrafter"/>
</dbReference>
<dbReference type="GO" id="GO:0051539">
    <property type="term" value="F:4 iron, 4 sulfur cluster binding"/>
    <property type="evidence" value="ECO:0007669"/>
    <property type="project" value="UniProtKB-UniRule"/>
</dbReference>
<dbReference type="GO" id="GO:0035599">
    <property type="term" value="F:aspartic acid methylthiotransferase activity"/>
    <property type="evidence" value="ECO:0007669"/>
    <property type="project" value="TreeGrafter"/>
</dbReference>
<dbReference type="GO" id="GO:0046872">
    <property type="term" value="F:metal ion binding"/>
    <property type="evidence" value="ECO:0007669"/>
    <property type="project" value="UniProtKB-KW"/>
</dbReference>
<dbReference type="GO" id="GO:0103039">
    <property type="term" value="F:protein methylthiotransferase activity"/>
    <property type="evidence" value="ECO:0007669"/>
    <property type="project" value="UniProtKB-EC"/>
</dbReference>
<dbReference type="GO" id="GO:0006400">
    <property type="term" value="P:tRNA modification"/>
    <property type="evidence" value="ECO:0007669"/>
    <property type="project" value="InterPro"/>
</dbReference>
<dbReference type="CDD" id="cd01335">
    <property type="entry name" value="Radical_SAM"/>
    <property type="match status" value="1"/>
</dbReference>
<dbReference type="FunFam" id="3.80.30.20:FF:000001">
    <property type="entry name" value="tRNA-2-methylthio-N(6)-dimethylallyladenosine synthase 2"/>
    <property type="match status" value="1"/>
</dbReference>
<dbReference type="Gene3D" id="3.40.50.12160">
    <property type="entry name" value="Methylthiotransferase, N-terminal domain"/>
    <property type="match status" value="1"/>
</dbReference>
<dbReference type="Gene3D" id="2.40.50.140">
    <property type="entry name" value="Nucleic acid-binding proteins"/>
    <property type="match status" value="1"/>
</dbReference>
<dbReference type="Gene3D" id="3.80.30.20">
    <property type="entry name" value="tm_1862 like domain"/>
    <property type="match status" value="1"/>
</dbReference>
<dbReference type="HAMAP" id="MF_01865">
    <property type="entry name" value="MTTase_RimO"/>
    <property type="match status" value="1"/>
</dbReference>
<dbReference type="InterPro" id="IPR006638">
    <property type="entry name" value="Elp3/MiaA/NifB-like_rSAM"/>
</dbReference>
<dbReference type="InterPro" id="IPR005839">
    <property type="entry name" value="Methylthiotransferase"/>
</dbReference>
<dbReference type="InterPro" id="IPR020612">
    <property type="entry name" value="Methylthiotransferase_CS"/>
</dbReference>
<dbReference type="InterPro" id="IPR013848">
    <property type="entry name" value="Methylthiotransferase_N"/>
</dbReference>
<dbReference type="InterPro" id="IPR038135">
    <property type="entry name" value="Methylthiotransferase_N_sf"/>
</dbReference>
<dbReference type="InterPro" id="IPR012340">
    <property type="entry name" value="NA-bd_OB-fold"/>
</dbReference>
<dbReference type="InterPro" id="IPR005840">
    <property type="entry name" value="Ribosomal_uS12_MeSTrfase_RimO"/>
</dbReference>
<dbReference type="InterPro" id="IPR007197">
    <property type="entry name" value="rSAM"/>
</dbReference>
<dbReference type="InterPro" id="IPR023404">
    <property type="entry name" value="rSAM_horseshoe"/>
</dbReference>
<dbReference type="InterPro" id="IPR002792">
    <property type="entry name" value="TRAM_dom"/>
</dbReference>
<dbReference type="NCBIfam" id="TIGR01125">
    <property type="entry name" value="30S ribosomal protein S12 methylthiotransferase RimO"/>
    <property type="match status" value="1"/>
</dbReference>
<dbReference type="NCBIfam" id="TIGR00089">
    <property type="entry name" value="MiaB/RimO family radical SAM methylthiotransferase"/>
    <property type="match status" value="1"/>
</dbReference>
<dbReference type="PANTHER" id="PTHR43837">
    <property type="entry name" value="RIBOSOMAL PROTEIN S12 METHYLTHIOTRANSFERASE RIMO"/>
    <property type="match status" value="1"/>
</dbReference>
<dbReference type="PANTHER" id="PTHR43837:SF1">
    <property type="entry name" value="RIBOSOMAL PROTEIN US12 METHYLTHIOTRANSFERASE RIMO"/>
    <property type="match status" value="1"/>
</dbReference>
<dbReference type="Pfam" id="PF04055">
    <property type="entry name" value="Radical_SAM"/>
    <property type="match status" value="1"/>
</dbReference>
<dbReference type="Pfam" id="PF18693">
    <property type="entry name" value="TRAM_2"/>
    <property type="match status" value="1"/>
</dbReference>
<dbReference type="Pfam" id="PF00919">
    <property type="entry name" value="UPF0004"/>
    <property type="match status" value="1"/>
</dbReference>
<dbReference type="SFLD" id="SFLDG01082">
    <property type="entry name" value="B12-binding_domain_containing"/>
    <property type="match status" value="1"/>
</dbReference>
<dbReference type="SFLD" id="SFLDS00029">
    <property type="entry name" value="Radical_SAM"/>
    <property type="match status" value="1"/>
</dbReference>
<dbReference type="SFLD" id="SFLDF00274">
    <property type="entry name" value="ribosomal_protein_S12_methylth"/>
    <property type="match status" value="1"/>
</dbReference>
<dbReference type="SMART" id="SM00729">
    <property type="entry name" value="Elp3"/>
    <property type="match status" value="1"/>
</dbReference>
<dbReference type="SUPFAM" id="SSF102114">
    <property type="entry name" value="Radical SAM enzymes"/>
    <property type="match status" value="1"/>
</dbReference>
<dbReference type="PROSITE" id="PS51449">
    <property type="entry name" value="MTTASE_N"/>
    <property type="match status" value="1"/>
</dbReference>
<dbReference type="PROSITE" id="PS01278">
    <property type="entry name" value="MTTASE_RADICAL"/>
    <property type="match status" value="1"/>
</dbReference>
<dbReference type="PROSITE" id="PS51918">
    <property type="entry name" value="RADICAL_SAM"/>
    <property type="match status" value="1"/>
</dbReference>
<dbReference type="PROSITE" id="PS50926">
    <property type="entry name" value="TRAM"/>
    <property type="match status" value="1"/>
</dbReference>
<comment type="function">
    <text evidence="1">Catalyzes the methylthiolation of an aspartic acid residue of ribosomal protein uS12.</text>
</comment>
<comment type="catalytic activity">
    <reaction evidence="1">
        <text>L-aspartate(89)-[ribosomal protein uS12]-hydrogen + (sulfur carrier)-SH + AH2 + 2 S-adenosyl-L-methionine = 3-methylsulfanyl-L-aspartate(89)-[ribosomal protein uS12]-hydrogen + (sulfur carrier)-H + 5'-deoxyadenosine + L-methionine + A + S-adenosyl-L-homocysteine + 2 H(+)</text>
        <dbReference type="Rhea" id="RHEA:37087"/>
        <dbReference type="Rhea" id="RHEA-COMP:10460"/>
        <dbReference type="Rhea" id="RHEA-COMP:10461"/>
        <dbReference type="Rhea" id="RHEA-COMP:14737"/>
        <dbReference type="Rhea" id="RHEA-COMP:14739"/>
        <dbReference type="ChEBI" id="CHEBI:13193"/>
        <dbReference type="ChEBI" id="CHEBI:15378"/>
        <dbReference type="ChEBI" id="CHEBI:17319"/>
        <dbReference type="ChEBI" id="CHEBI:17499"/>
        <dbReference type="ChEBI" id="CHEBI:29917"/>
        <dbReference type="ChEBI" id="CHEBI:29961"/>
        <dbReference type="ChEBI" id="CHEBI:57844"/>
        <dbReference type="ChEBI" id="CHEBI:57856"/>
        <dbReference type="ChEBI" id="CHEBI:59789"/>
        <dbReference type="ChEBI" id="CHEBI:64428"/>
        <dbReference type="ChEBI" id="CHEBI:73599"/>
        <dbReference type="EC" id="2.8.4.4"/>
    </reaction>
</comment>
<comment type="cofactor">
    <cofactor evidence="1">
        <name>[4Fe-4S] cluster</name>
        <dbReference type="ChEBI" id="CHEBI:49883"/>
    </cofactor>
    <text evidence="1">Binds 2 [4Fe-4S] clusters. One cluster is coordinated with 3 cysteines and an exchangeable S-adenosyl-L-methionine.</text>
</comment>
<comment type="subcellular location">
    <subcellularLocation>
        <location evidence="1">Cytoplasm</location>
    </subcellularLocation>
</comment>
<comment type="similarity">
    <text evidence="1">Belongs to the methylthiotransferase family. RimO subfamily.</text>
</comment>
<comment type="sequence caution" evidence="3">
    <conflict type="erroneous initiation">
        <sequence resource="EMBL-CDS" id="BAD79784"/>
    </conflict>
</comment>
<keyword id="KW-0004">4Fe-4S</keyword>
<keyword id="KW-0963">Cytoplasm</keyword>
<keyword id="KW-0408">Iron</keyword>
<keyword id="KW-0411">Iron-sulfur</keyword>
<keyword id="KW-0479">Metal-binding</keyword>
<keyword id="KW-0949">S-adenosyl-L-methionine</keyword>
<keyword id="KW-0808">Transferase</keyword>
<feature type="chain" id="PRO_0000375030" description="Ribosomal protein uS12 methylthiotransferase RimO">
    <location>
        <begin position="1"/>
        <end position="452"/>
    </location>
</feature>
<feature type="domain" description="MTTase N-terminal" evidence="1">
    <location>
        <begin position="5"/>
        <end position="116"/>
    </location>
</feature>
<feature type="domain" description="Radical SAM core" evidence="2">
    <location>
        <begin position="140"/>
        <end position="369"/>
    </location>
</feature>
<feature type="domain" description="TRAM" evidence="1">
    <location>
        <begin position="372"/>
        <end position="438"/>
    </location>
</feature>
<feature type="binding site" evidence="1">
    <location>
        <position position="14"/>
    </location>
    <ligand>
        <name>[4Fe-4S] cluster</name>
        <dbReference type="ChEBI" id="CHEBI:49883"/>
        <label>1</label>
    </ligand>
</feature>
<feature type="binding site" evidence="1">
    <location>
        <position position="50"/>
    </location>
    <ligand>
        <name>[4Fe-4S] cluster</name>
        <dbReference type="ChEBI" id="CHEBI:49883"/>
        <label>1</label>
    </ligand>
</feature>
<feature type="binding site" evidence="1">
    <location>
        <position position="79"/>
    </location>
    <ligand>
        <name>[4Fe-4S] cluster</name>
        <dbReference type="ChEBI" id="CHEBI:49883"/>
        <label>1</label>
    </ligand>
</feature>
<feature type="binding site" evidence="1">
    <location>
        <position position="154"/>
    </location>
    <ligand>
        <name>[4Fe-4S] cluster</name>
        <dbReference type="ChEBI" id="CHEBI:49883"/>
        <label>2</label>
        <note>4Fe-4S-S-AdoMet</note>
    </ligand>
</feature>
<feature type="binding site" evidence="1">
    <location>
        <position position="158"/>
    </location>
    <ligand>
        <name>[4Fe-4S] cluster</name>
        <dbReference type="ChEBI" id="CHEBI:49883"/>
        <label>2</label>
        <note>4Fe-4S-S-AdoMet</note>
    </ligand>
</feature>
<feature type="binding site" evidence="1">
    <location>
        <position position="161"/>
    </location>
    <ligand>
        <name>[4Fe-4S] cluster</name>
        <dbReference type="ChEBI" id="CHEBI:49883"/>
        <label>2</label>
        <note>4Fe-4S-S-AdoMet</note>
    </ligand>
</feature>
<protein>
    <recommendedName>
        <fullName evidence="1">Ribosomal protein uS12 methylthiotransferase RimO</fullName>
        <shortName evidence="1">uS12 MTTase</shortName>
        <shortName evidence="1">uS12 methylthiotransferase</shortName>
        <ecNumber evidence="1">2.8.4.4</ecNumber>
    </recommendedName>
    <alternativeName>
        <fullName evidence="1">Ribosomal protein uS12 (aspartate-C(3))-methylthiotransferase</fullName>
    </alternativeName>
    <alternativeName>
        <fullName evidence="1">Ribosome maturation factor RimO</fullName>
    </alternativeName>
</protein>
<sequence>MTAKPTIAFSHLGCEKNRIDTEHMIGLLAEAGYGIDANEALADVVVVNTCSFIQAAREESVRTLVELAESGKKIVIAGCLAQHFQDQLLAELPEAIALVGTGDYHRIVDVLQRTESGERVNAISQEPSFIADENLPRYRTTTSAVAYLRVAEGCDYRCAFCIIPHLRGKRRSRSIESIVAEAKQLAAEGVQELVLISQITTNYGLDRYGKPMLAELLRQLGQVDVPWIRIHYAYPTGLTPEVIAAIRETHNVLPYLDLPLQHSHPEILKAMNRPWQGNVNDRIIEKLKEALPDAVLRTTFIAGFPGETEEHFRHLQQFIQRHEFDHVGVFAFSPEEGTAAIDLPNPVPDDVKEARRDALMATQQPIAERRNRAQIGRLVDVLIEQEHPSTGLKIGRSARFAPEVDGVVYVQGDAALGQLVTVRITDADIYDLHGEVASAADLFQVSRQPSLA</sequence>
<accession>Q5N1N6</accession>
<name>RIMO_SYNP6</name>
<proteinExistence type="inferred from homology"/>
<reference key="1">
    <citation type="journal article" date="2007" name="Photosyn. Res.">
        <title>Complete nucleotide sequence of the freshwater unicellular cyanobacterium Synechococcus elongatus PCC 6301 chromosome: gene content and organization.</title>
        <authorList>
            <person name="Sugita C."/>
            <person name="Ogata K."/>
            <person name="Shikata M."/>
            <person name="Jikuya H."/>
            <person name="Takano J."/>
            <person name="Furumichi M."/>
            <person name="Kanehisa M."/>
            <person name="Omata T."/>
            <person name="Sugiura M."/>
            <person name="Sugita M."/>
        </authorList>
    </citation>
    <scope>NUCLEOTIDE SEQUENCE [LARGE SCALE GENOMIC DNA]</scope>
    <source>
        <strain>ATCC 27144 / PCC 6301 / SAUG 1402/1</strain>
    </source>
</reference>
<evidence type="ECO:0000255" key="1">
    <source>
        <dbReference type="HAMAP-Rule" id="MF_01865"/>
    </source>
</evidence>
<evidence type="ECO:0000255" key="2">
    <source>
        <dbReference type="PROSITE-ProRule" id="PRU01266"/>
    </source>
</evidence>
<evidence type="ECO:0000305" key="3"/>